<gene>
    <name type="ORF">CHGG_00332</name>
</gene>
<organism>
    <name type="scientific">Chaetomium globosum (strain ATCC 6205 / CBS 148.51 / DSM 1962 / NBRC 6347 / NRRL 1970)</name>
    <name type="common">Soil fungus</name>
    <dbReference type="NCBI Taxonomy" id="306901"/>
    <lineage>
        <taxon>Eukaryota</taxon>
        <taxon>Fungi</taxon>
        <taxon>Dikarya</taxon>
        <taxon>Ascomycota</taxon>
        <taxon>Pezizomycotina</taxon>
        <taxon>Sordariomycetes</taxon>
        <taxon>Sordariomycetidae</taxon>
        <taxon>Sordariales</taxon>
        <taxon>Chaetomiaceae</taxon>
        <taxon>Chaetomium</taxon>
    </lineage>
</organism>
<accession>Q2HHH2</accession>
<dbReference type="EMBL" id="CH408029">
    <property type="protein sequence ID" value="EAQ92097.1"/>
    <property type="molecule type" value="Genomic_DNA"/>
</dbReference>
<dbReference type="RefSeq" id="XP_001219553.1">
    <property type="nucleotide sequence ID" value="XM_001219552.1"/>
</dbReference>
<dbReference type="SMR" id="Q2HHH2"/>
<dbReference type="FunCoup" id="Q2HHH2">
    <property type="interactions" value="607"/>
</dbReference>
<dbReference type="STRING" id="306901.Q2HHH2"/>
<dbReference type="GeneID" id="4388252"/>
<dbReference type="VEuPathDB" id="FungiDB:CHGG_00332"/>
<dbReference type="eggNOG" id="KOG4328">
    <property type="taxonomic scope" value="Eukaryota"/>
</dbReference>
<dbReference type="HOGENOM" id="CLU_017019_1_1_1"/>
<dbReference type="InParanoid" id="Q2HHH2"/>
<dbReference type="OMA" id="DPNTLYW"/>
<dbReference type="OrthoDB" id="9890280at2759"/>
<dbReference type="Proteomes" id="UP000001056">
    <property type="component" value="Unassembled WGS sequence"/>
</dbReference>
<dbReference type="GO" id="GO:0005634">
    <property type="term" value="C:nucleus"/>
    <property type="evidence" value="ECO:0007669"/>
    <property type="project" value="TreeGrafter"/>
</dbReference>
<dbReference type="GO" id="GO:0003677">
    <property type="term" value="F:DNA binding"/>
    <property type="evidence" value="ECO:0007669"/>
    <property type="project" value="UniProtKB-KW"/>
</dbReference>
<dbReference type="GO" id="GO:0006974">
    <property type="term" value="P:DNA damage response"/>
    <property type="evidence" value="ECO:0007669"/>
    <property type="project" value="UniProtKB-KW"/>
</dbReference>
<dbReference type="GO" id="GO:2000001">
    <property type="term" value="P:regulation of DNA damage checkpoint"/>
    <property type="evidence" value="ECO:0007669"/>
    <property type="project" value="TreeGrafter"/>
</dbReference>
<dbReference type="FunFam" id="2.130.10.10:FF:000562">
    <property type="entry name" value="DNA damage-binding protein CMR1"/>
    <property type="match status" value="1"/>
</dbReference>
<dbReference type="Gene3D" id="2.130.10.10">
    <property type="entry name" value="YVTN repeat-like/Quinoprotein amine dehydrogenase"/>
    <property type="match status" value="1"/>
</dbReference>
<dbReference type="InterPro" id="IPR015943">
    <property type="entry name" value="WD40/YVTN_repeat-like_dom_sf"/>
</dbReference>
<dbReference type="InterPro" id="IPR036322">
    <property type="entry name" value="WD40_repeat_dom_sf"/>
</dbReference>
<dbReference type="InterPro" id="IPR001680">
    <property type="entry name" value="WD40_rpt"/>
</dbReference>
<dbReference type="InterPro" id="IPR050853">
    <property type="entry name" value="WD_repeat_DNA-damage-binding"/>
</dbReference>
<dbReference type="PANTHER" id="PTHR14773">
    <property type="entry name" value="WD REPEAT-CONTAINING PROTEIN 76"/>
    <property type="match status" value="1"/>
</dbReference>
<dbReference type="PANTHER" id="PTHR14773:SF0">
    <property type="entry name" value="WD REPEAT-CONTAINING PROTEIN 76"/>
    <property type="match status" value="1"/>
</dbReference>
<dbReference type="Pfam" id="PF00400">
    <property type="entry name" value="WD40"/>
    <property type="match status" value="2"/>
</dbReference>
<dbReference type="SMART" id="SM00320">
    <property type="entry name" value="WD40"/>
    <property type="match status" value="4"/>
</dbReference>
<dbReference type="SUPFAM" id="SSF50978">
    <property type="entry name" value="WD40 repeat-like"/>
    <property type="match status" value="1"/>
</dbReference>
<dbReference type="PROSITE" id="PS00678">
    <property type="entry name" value="WD_REPEATS_1"/>
    <property type="match status" value="1"/>
</dbReference>
<dbReference type="PROSITE" id="PS50082">
    <property type="entry name" value="WD_REPEATS_2"/>
    <property type="match status" value="1"/>
</dbReference>
<dbReference type="PROSITE" id="PS50294">
    <property type="entry name" value="WD_REPEATS_REGION"/>
    <property type="match status" value="1"/>
</dbReference>
<feature type="chain" id="PRO_0000351104" description="DNA damage-binding protein CMR1">
    <location>
        <begin position="1"/>
        <end position="524"/>
    </location>
</feature>
<feature type="repeat" description="WD 1" evidence="2">
    <location>
        <begin position="184"/>
        <end position="225"/>
    </location>
</feature>
<feature type="repeat" description="WD 2" evidence="2">
    <location>
        <begin position="245"/>
        <end position="285"/>
    </location>
</feature>
<feature type="repeat" description="WD 3" evidence="2">
    <location>
        <begin position="295"/>
        <end position="332"/>
    </location>
</feature>
<feature type="repeat" description="WD 4" evidence="2">
    <location>
        <begin position="336"/>
        <end position="376"/>
    </location>
</feature>
<feature type="repeat" description="WD 5" evidence="2">
    <location>
        <begin position="385"/>
        <end position="425"/>
    </location>
</feature>
<feature type="repeat" description="WD 6" evidence="2">
    <location>
        <begin position="447"/>
        <end position="490"/>
    </location>
</feature>
<feature type="repeat" description="WD 7" evidence="2">
    <location>
        <begin position="493"/>
        <end position="524"/>
    </location>
</feature>
<feature type="region of interest" description="Disordered" evidence="3">
    <location>
        <begin position="35"/>
        <end position="79"/>
    </location>
</feature>
<feature type="compositionally biased region" description="Basic and acidic residues" evidence="3">
    <location>
        <begin position="54"/>
        <end position="65"/>
    </location>
</feature>
<protein>
    <recommendedName>
        <fullName evidence="1">DNA damage-binding protein CMR1</fullName>
    </recommendedName>
</protein>
<reference key="1">
    <citation type="journal article" date="2015" name="Genome Announc.">
        <title>Draft genome sequence of the cellulolytic fungus Chaetomium globosum.</title>
        <authorList>
            <person name="Cuomo C.A."/>
            <person name="Untereiner W.A."/>
            <person name="Ma L.-J."/>
            <person name="Grabherr M."/>
            <person name="Birren B.W."/>
        </authorList>
    </citation>
    <scope>NUCLEOTIDE SEQUENCE [LARGE SCALE GENOMIC DNA]</scope>
    <source>
        <strain>ATCC 6205 / CBS 148.51 / DSM 1962 / NBRC 6347 / NRRL 1970</strain>
    </source>
</reference>
<name>CMR1_CHAGB</name>
<evidence type="ECO:0000250" key="1">
    <source>
        <dbReference type="UniProtKB" id="Q12510"/>
    </source>
</evidence>
<evidence type="ECO:0000255" key="2"/>
<evidence type="ECO:0000256" key="3">
    <source>
        <dbReference type="SAM" id="MobiDB-lite"/>
    </source>
</evidence>
<evidence type="ECO:0000305" key="4"/>
<sequence length="524" mass="57094">MPPKKEPVISAFERKRLENIANNNAILSGISTTAEKIIPKPAPPKPKRASAPRAKREPVKRETARPTRQSSRLAGLDADADTLKRKAEVEAEVEAEKAKAKKMRVSGDLSLGDIQVEGRKWENGLDGLAGLKGLSARGAQPGIRTFTDEDVKGTTDKGLKDLRLRMSGLKLYEKWPVQGAYPKLVPQRVYSLGFHPTESKPIIFAGDKEGAMGVFDASQEPVKAEDDDDDEEAEIPDPIISAFKTHSRTITSFHFSPVDANAVYSASYDSSIRKLDLDKGVSTEAFAPADADEDLPISAIDMPTSDPNMIIFSTLQGTLGRHDLRTKSSTAEIWGLTDQKIGGFSLHPAQPHLVATASLDRTLKIWDLRKIQGKGDARAPALLGTHDSRLSVSHASWSSAGHVATSSYDDRIKIYNFPDADKWTAGAALTEAQMEPARQIPHNNQTGRWVTILKPQWQRSPRDGLQKFVIGNMNRFVDVFAADGEQLAQLGGDGITAVPAVAHFHPTMDWVAGGNGSGKLCLWM</sequence>
<comment type="function">
    <text evidence="1">DNA-binding protein that binds to both single- and double-stranded DNA. Binds preferentially to UV-damaged DNA. May be involved in DNA-metabolic processes.</text>
</comment>
<comment type="similarity">
    <text evidence="4">Belongs to the WD repeat DDB2/WDR76 family.</text>
</comment>
<keyword id="KW-0227">DNA damage</keyword>
<keyword id="KW-0238">DNA-binding</keyword>
<keyword id="KW-1185">Reference proteome</keyword>
<keyword id="KW-0677">Repeat</keyword>
<keyword id="KW-0853">WD repeat</keyword>
<proteinExistence type="inferred from homology"/>